<proteinExistence type="inferred from homology"/>
<comment type="function">
    <text evidence="1">Catalyzes the transfer of a phosphate group to glutamate to form L-glutamate 5-phosphate.</text>
</comment>
<comment type="catalytic activity">
    <reaction evidence="1">
        <text>L-glutamate + ATP = L-glutamyl 5-phosphate + ADP</text>
        <dbReference type="Rhea" id="RHEA:14877"/>
        <dbReference type="ChEBI" id="CHEBI:29985"/>
        <dbReference type="ChEBI" id="CHEBI:30616"/>
        <dbReference type="ChEBI" id="CHEBI:58274"/>
        <dbReference type="ChEBI" id="CHEBI:456216"/>
        <dbReference type="EC" id="2.7.2.11"/>
    </reaction>
</comment>
<comment type="pathway">
    <text evidence="1">Amino-acid biosynthesis; L-proline biosynthesis; L-glutamate 5-semialdehyde from L-glutamate: step 1/2.</text>
</comment>
<comment type="subcellular location">
    <subcellularLocation>
        <location evidence="1">Cytoplasm</location>
    </subcellularLocation>
</comment>
<comment type="similarity">
    <text evidence="1">Belongs to the glutamate 5-kinase family.</text>
</comment>
<organism>
    <name type="scientific">Escherichia coli O139:H28 (strain E24377A / ETEC)</name>
    <dbReference type="NCBI Taxonomy" id="331111"/>
    <lineage>
        <taxon>Bacteria</taxon>
        <taxon>Pseudomonadati</taxon>
        <taxon>Pseudomonadota</taxon>
        <taxon>Gammaproteobacteria</taxon>
        <taxon>Enterobacterales</taxon>
        <taxon>Enterobacteriaceae</taxon>
        <taxon>Escherichia</taxon>
    </lineage>
</organism>
<dbReference type="EC" id="2.7.2.11" evidence="1"/>
<dbReference type="EMBL" id="CP000800">
    <property type="protein sequence ID" value="ABV20559.1"/>
    <property type="molecule type" value="Genomic_DNA"/>
</dbReference>
<dbReference type="RefSeq" id="WP_001285288.1">
    <property type="nucleotide sequence ID" value="NC_009801.1"/>
</dbReference>
<dbReference type="SMR" id="A7ZI01"/>
<dbReference type="GeneID" id="93777151"/>
<dbReference type="KEGG" id="ecw:EcE24377A_0274"/>
<dbReference type="HOGENOM" id="CLU_025400_2_0_6"/>
<dbReference type="UniPathway" id="UPA00098">
    <property type="reaction ID" value="UER00359"/>
</dbReference>
<dbReference type="Proteomes" id="UP000001122">
    <property type="component" value="Chromosome"/>
</dbReference>
<dbReference type="GO" id="GO:0005829">
    <property type="term" value="C:cytosol"/>
    <property type="evidence" value="ECO:0007669"/>
    <property type="project" value="TreeGrafter"/>
</dbReference>
<dbReference type="GO" id="GO:0005524">
    <property type="term" value="F:ATP binding"/>
    <property type="evidence" value="ECO:0007669"/>
    <property type="project" value="UniProtKB-KW"/>
</dbReference>
<dbReference type="GO" id="GO:0004349">
    <property type="term" value="F:glutamate 5-kinase activity"/>
    <property type="evidence" value="ECO:0007669"/>
    <property type="project" value="UniProtKB-UniRule"/>
</dbReference>
<dbReference type="GO" id="GO:0003723">
    <property type="term" value="F:RNA binding"/>
    <property type="evidence" value="ECO:0007669"/>
    <property type="project" value="InterPro"/>
</dbReference>
<dbReference type="GO" id="GO:0055129">
    <property type="term" value="P:L-proline biosynthetic process"/>
    <property type="evidence" value="ECO:0007669"/>
    <property type="project" value="UniProtKB-UniRule"/>
</dbReference>
<dbReference type="CDD" id="cd04242">
    <property type="entry name" value="AAK_G5K_ProB"/>
    <property type="match status" value="1"/>
</dbReference>
<dbReference type="CDD" id="cd21157">
    <property type="entry name" value="PUA_G5K"/>
    <property type="match status" value="1"/>
</dbReference>
<dbReference type="FunFam" id="2.30.130.10:FF:000003">
    <property type="entry name" value="Glutamate 5-kinase"/>
    <property type="match status" value="1"/>
</dbReference>
<dbReference type="FunFam" id="3.40.1160.10:FF:000006">
    <property type="entry name" value="Glutamate 5-kinase"/>
    <property type="match status" value="1"/>
</dbReference>
<dbReference type="Gene3D" id="3.40.1160.10">
    <property type="entry name" value="Acetylglutamate kinase-like"/>
    <property type="match status" value="2"/>
</dbReference>
<dbReference type="Gene3D" id="2.30.130.10">
    <property type="entry name" value="PUA domain"/>
    <property type="match status" value="1"/>
</dbReference>
<dbReference type="HAMAP" id="MF_00456">
    <property type="entry name" value="ProB"/>
    <property type="match status" value="1"/>
</dbReference>
<dbReference type="InterPro" id="IPR036393">
    <property type="entry name" value="AceGlu_kinase-like_sf"/>
</dbReference>
<dbReference type="InterPro" id="IPR001048">
    <property type="entry name" value="Asp/Glu/Uridylate_kinase"/>
</dbReference>
<dbReference type="InterPro" id="IPR041739">
    <property type="entry name" value="G5K_ProB"/>
</dbReference>
<dbReference type="InterPro" id="IPR001057">
    <property type="entry name" value="Glu/AcGlu_kinase"/>
</dbReference>
<dbReference type="InterPro" id="IPR011529">
    <property type="entry name" value="Glu_5kinase"/>
</dbReference>
<dbReference type="InterPro" id="IPR005715">
    <property type="entry name" value="Glu_5kinase/COase_Synthase"/>
</dbReference>
<dbReference type="InterPro" id="IPR019797">
    <property type="entry name" value="Glutamate_5-kinase_CS"/>
</dbReference>
<dbReference type="InterPro" id="IPR002478">
    <property type="entry name" value="PUA"/>
</dbReference>
<dbReference type="InterPro" id="IPR015947">
    <property type="entry name" value="PUA-like_sf"/>
</dbReference>
<dbReference type="InterPro" id="IPR036974">
    <property type="entry name" value="PUA_sf"/>
</dbReference>
<dbReference type="NCBIfam" id="TIGR01027">
    <property type="entry name" value="proB"/>
    <property type="match status" value="1"/>
</dbReference>
<dbReference type="PANTHER" id="PTHR43654">
    <property type="entry name" value="GLUTAMATE 5-KINASE"/>
    <property type="match status" value="1"/>
</dbReference>
<dbReference type="PANTHER" id="PTHR43654:SF1">
    <property type="entry name" value="ISOPENTENYL PHOSPHATE KINASE"/>
    <property type="match status" value="1"/>
</dbReference>
<dbReference type="Pfam" id="PF00696">
    <property type="entry name" value="AA_kinase"/>
    <property type="match status" value="1"/>
</dbReference>
<dbReference type="Pfam" id="PF01472">
    <property type="entry name" value="PUA"/>
    <property type="match status" value="1"/>
</dbReference>
<dbReference type="PIRSF" id="PIRSF000729">
    <property type="entry name" value="GK"/>
    <property type="match status" value="1"/>
</dbReference>
<dbReference type="PRINTS" id="PR00474">
    <property type="entry name" value="GLU5KINASE"/>
</dbReference>
<dbReference type="SMART" id="SM00359">
    <property type="entry name" value="PUA"/>
    <property type="match status" value="1"/>
</dbReference>
<dbReference type="SUPFAM" id="SSF53633">
    <property type="entry name" value="Carbamate kinase-like"/>
    <property type="match status" value="1"/>
</dbReference>
<dbReference type="SUPFAM" id="SSF88697">
    <property type="entry name" value="PUA domain-like"/>
    <property type="match status" value="1"/>
</dbReference>
<dbReference type="PROSITE" id="PS00902">
    <property type="entry name" value="GLUTAMATE_5_KINASE"/>
    <property type="match status" value="1"/>
</dbReference>
<dbReference type="PROSITE" id="PS50890">
    <property type="entry name" value="PUA"/>
    <property type="match status" value="1"/>
</dbReference>
<reference key="1">
    <citation type="journal article" date="2008" name="J. Bacteriol.">
        <title>The pangenome structure of Escherichia coli: comparative genomic analysis of E. coli commensal and pathogenic isolates.</title>
        <authorList>
            <person name="Rasko D.A."/>
            <person name="Rosovitz M.J."/>
            <person name="Myers G.S.A."/>
            <person name="Mongodin E.F."/>
            <person name="Fricke W.F."/>
            <person name="Gajer P."/>
            <person name="Crabtree J."/>
            <person name="Sebaihia M."/>
            <person name="Thomson N.R."/>
            <person name="Chaudhuri R."/>
            <person name="Henderson I.R."/>
            <person name="Sperandio V."/>
            <person name="Ravel J."/>
        </authorList>
    </citation>
    <scope>NUCLEOTIDE SEQUENCE [LARGE SCALE GENOMIC DNA]</scope>
    <source>
        <strain>E24377A / ETEC</strain>
    </source>
</reference>
<feature type="chain" id="PRO_1000081056" description="Glutamate 5-kinase">
    <location>
        <begin position="1"/>
        <end position="367"/>
    </location>
</feature>
<feature type="domain" description="PUA" evidence="1">
    <location>
        <begin position="275"/>
        <end position="353"/>
    </location>
</feature>
<feature type="binding site" evidence="1">
    <location>
        <position position="10"/>
    </location>
    <ligand>
        <name>ATP</name>
        <dbReference type="ChEBI" id="CHEBI:30616"/>
    </ligand>
</feature>
<feature type="binding site" evidence="1">
    <location>
        <position position="50"/>
    </location>
    <ligand>
        <name>substrate</name>
    </ligand>
</feature>
<feature type="binding site" evidence="1">
    <location>
        <position position="137"/>
    </location>
    <ligand>
        <name>substrate</name>
    </ligand>
</feature>
<feature type="binding site" evidence="1">
    <location>
        <position position="149"/>
    </location>
    <ligand>
        <name>substrate</name>
    </ligand>
</feature>
<feature type="binding site" evidence="1">
    <location>
        <begin position="169"/>
        <end position="170"/>
    </location>
    <ligand>
        <name>ATP</name>
        <dbReference type="ChEBI" id="CHEBI:30616"/>
    </ligand>
</feature>
<feature type="binding site" evidence="1">
    <location>
        <begin position="211"/>
        <end position="217"/>
    </location>
    <ligand>
        <name>ATP</name>
        <dbReference type="ChEBI" id="CHEBI:30616"/>
    </ligand>
</feature>
<sequence>MSDSQTLVVKLGTSVLTGGSRRLNRAHIVELVRQCAQLHAAGHRIVIVTSGAIAAGREHLGYPELPATIASKQLLAAVGQSRLIQLWEQLFSIYGIHVGQMLLTRADMEDRERFLNARDTLRALLDNNIVPVINENDAVATAEIKVGDNDNLSALAAILAGADKLLLLTDQKGLYTADPRSNPQAELIKDVYGIDDALRAIAGDSVSGLGTGGMSTKLQAADVACRAGIDTIIAAGSKPGVIGDVMEGISVGTLFHAQATPLENRKRWIFGAPPAGEITVDEGATAAILERGSSLLPKGIKSVTGNFSRGEVIRICNLEGRDIAHGVSRYNSDALRRIAGHHSQEIDAILGYEYGPVAVHRDDMITR</sequence>
<protein>
    <recommendedName>
        <fullName evidence="1">Glutamate 5-kinase</fullName>
        <ecNumber evidence="1">2.7.2.11</ecNumber>
    </recommendedName>
    <alternativeName>
        <fullName evidence="1">Gamma-glutamyl kinase</fullName>
        <shortName evidence="1">GK</shortName>
    </alternativeName>
</protein>
<keyword id="KW-0028">Amino-acid biosynthesis</keyword>
<keyword id="KW-0067">ATP-binding</keyword>
<keyword id="KW-0963">Cytoplasm</keyword>
<keyword id="KW-0418">Kinase</keyword>
<keyword id="KW-0547">Nucleotide-binding</keyword>
<keyword id="KW-0641">Proline biosynthesis</keyword>
<keyword id="KW-1185">Reference proteome</keyword>
<keyword id="KW-0808">Transferase</keyword>
<accession>A7ZI01</accession>
<name>PROB_ECO24</name>
<evidence type="ECO:0000255" key="1">
    <source>
        <dbReference type="HAMAP-Rule" id="MF_00456"/>
    </source>
</evidence>
<gene>
    <name evidence="1" type="primary">proB</name>
    <name type="ordered locus">EcE24377A_0274</name>
</gene>